<evidence type="ECO:0000255" key="1"/>
<evidence type="ECO:0000269" key="2">
    <source>
    </source>
</evidence>
<evidence type="ECO:0000269" key="3">
    <source>
    </source>
</evidence>
<evidence type="ECO:0000269" key="4">
    <source>
    </source>
</evidence>
<evidence type="ECO:0000269" key="5">
    <source>
    </source>
</evidence>
<evidence type="ECO:0000269" key="6">
    <source>
    </source>
</evidence>
<evidence type="ECO:0000269" key="7">
    <source>
    </source>
</evidence>
<evidence type="ECO:0000303" key="8">
    <source>
    </source>
</evidence>
<evidence type="ECO:0000305" key="9"/>
<evidence type="ECO:0007744" key="10">
    <source>
        <dbReference type="PDB" id="2NC2"/>
    </source>
</evidence>
<evidence type="ECO:0007829" key="11">
    <source>
        <dbReference type="PDB" id="9IID"/>
    </source>
</evidence>
<keyword id="KW-0002">3D-structure</keyword>
<keyword id="KW-0929">Antimicrobial</keyword>
<keyword id="KW-0903">Direct protein sequencing</keyword>
<keyword id="KW-1015">Disulfide bond</keyword>
<keyword id="KW-0295">Fungicide</keyword>
<keyword id="KW-1035">Host cytoplasm</keyword>
<keyword id="KW-0964">Secreted</keyword>
<keyword id="KW-0732">Signal</keyword>
<reference key="1">
    <citation type="journal article" date="2010" name="Peptides">
        <title>Characterization of the novel antifungal protein PgAFP and the encoding gene of Penicillium chrysogenum.</title>
        <authorList>
            <person name="Rodriguez-Martin A."/>
            <person name="Acosta R."/>
            <person name="Liddell S."/>
            <person name="Nunez F."/>
            <person name="Benito M.J."/>
            <person name="Asensio M.A."/>
        </authorList>
    </citation>
    <scope>NUCLEOTIDE SEQUENCE [GENOMIC DNA]</scope>
    <scope>PROTEIN SEQUENCE OF 35-53; 57-69; 79-84 AND 88-92</scope>
    <scope>FUNCTION</scope>
    <scope>SUBCELLULAR LOCATION</scope>
    <scope>MASS SPECTROMETRY</scope>
    <source>
        <strain>RP42C</strain>
    </source>
</reference>
<reference key="2">
    <citation type="journal article" date="2009" name="Int. J. Food Microbiol.">
        <title>Selection of antifungal protein-producing molds from dry-cured meat products.</title>
        <authorList>
            <person name="Acosta R."/>
            <person name="Rodriguez-Martin A."/>
            <person name="Martin A."/>
            <person name="Nunez F."/>
            <person name="Asensio M.A."/>
        </authorList>
    </citation>
    <scope>IDENTIFICATION</scope>
    <scope>FUNCTION</scope>
</reference>
<reference key="3">
    <citation type="journal article" date="2019" name="Microorganisms">
        <title>Nutrient excess triggers the expression of the Penicillium chrysogenum antifungal protein PAFB.</title>
        <authorList>
            <person name="Huber A."/>
            <person name="Lerchster H."/>
            <person name="Marx F."/>
        </authorList>
    </citation>
    <scope>INDUCTION</scope>
</reference>
<reference key="4">
    <citation type="journal article" date="2021" name="J. Fungi">
        <title>Potential of antifungal proteins (AFPs) to control Penicillium postharvest fruit decay.</title>
        <authorList>
            <person name="Gandia M."/>
            <person name="Kakar A."/>
            <person name="Giner-Llorca M."/>
            <person name="Holzknecht J."/>
            <person name="Martinez-Culebras P."/>
            <person name="Galgoczy L."/>
            <person name="Marx F."/>
            <person name="Marcos J.F."/>
            <person name="Manzanares P."/>
        </authorList>
    </citation>
    <scope>FUNCTION</scope>
</reference>
<reference key="5">
    <citation type="journal article" date="2022" name="Microbiol. Spectr.">
        <title>Small, cationic antifungal proteins from filamentous fungi inhibit Candida albicans growth in 3D skin infection models.</title>
        <authorList>
            <person name="Holzknecht J."/>
            <person name="Dubrac S."/>
            <person name="Hedtrich S."/>
            <person name="Galgoczy L."/>
            <person name="Marx F."/>
        </authorList>
    </citation>
    <scope>FUNCTION</scope>
</reference>
<reference evidence="10" key="6">
    <citation type="journal article" date="2018" name="Sci. Rep.">
        <title>New Antimicrobial potential and structural properties of PAFB: A cationic, cysteine-rich protein from Penicillium chrysogenum Q176.</title>
        <authorList>
            <person name="Huber A."/>
            <person name="Hajdu D."/>
            <person name="Bratschun-Khan D."/>
            <person name="Gaspari Z."/>
            <person name="Varbanov M."/>
            <person name="Philippot S."/>
            <person name="Fizil A."/>
            <person name="Czajlik A."/>
            <person name="Kele Z."/>
            <person name="Sonderegger C."/>
            <person name="Galgoczy L."/>
            <person name="Bodor A."/>
            <person name="Marx F."/>
            <person name="Batta G."/>
        </authorList>
    </citation>
    <scope>STRUCTURE BY NMR OF 37-92</scope>
    <scope>DISULFIDE BOND</scope>
    <scope>FUNCTION</scope>
    <scope>SUBCELLULAR LOCATION</scope>
</reference>
<name>AFP_PENCH</name>
<protein>
    <recommendedName>
        <fullName evidence="8">Antifungal protein B</fullName>
    </recommendedName>
</protein>
<proteinExistence type="evidence at protein level"/>
<dbReference type="EMBL" id="GQ911150">
    <property type="protein sequence ID" value="ACX54052.1"/>
    <property type="molecule type" value="Genomic_DNA"/>
</dbReference>
<dbReference type="PDB" id="2NC2">
    <property type="method" value="NMR"/>
    <property type="chains" value="A=37-92"/>
</dbReference>
<dbReference type="PDB" id="9IID">
    <property type="method" value="X-ray"/>
    <property type="resolution" value="1.78 A"/>
    <property type="chains" value="A=35-92"/>
</dbReference>
<dbReference type="PDBsum" id="2NC2"/>
<dbReference type="PDBsum" id="9IID"/>
<dbReference type="BMRB" id="D0EXD3"/>
<dbReference type="SMR" id="D0EXD3"/>
<dbReference type="GO" id="GO:0005576">
    <property type="term" value="C:extracellular region"/>
    <property type="evidence" value="ECO:0000314"/>
    <property type="project" value="UniProtKB"/>
</dbReference>
<dbReference type="GO" id="GO:0030430">
    <property type="term" value="C:host cell cytoplasm"/>
    <property type="evidence" value="ECO:0007669"/>
    <property type="project" value="UniProtKB-SubCell"/>
</dbReference>
<dbReference type="GO" id="GO:0050832">
    <property type="term" value="P:defense response to fungus"/>
    <property type="evidence" value="ECO:0000314"/>
    <property type="project" value="UniProtKB"/>
</dbReference>
<dbReference type="GO" id="GO:0031640">
    <property type="term" value="P:killing of cells of another organism"/>
    <property type="evidence" value="ECO:0007669"/>
    <property type="project" value="UniProtKB-KW"/>
</dbReference>
<dbReference type="Gene3D" id="2.40.50.60">
    <property type="entry name" value="Antifungal protein domain"/>
    <property type="match status" value="1"/>
</dbReference>
<dbReference type="InterPro" id="IPR023112">
    <property type="entry name" value="Antifungal-protein_dom_sf"/>
</dbReference>
<dbReference type="InterPro" id="IPR022706">
    <property type="entry name" value="Antifungal_prot"/>
</dbReference>
<dbReference type="Pfam" id="PF11402">
    <property type="entry name" value="Antifungal_prot"/>
    <property type="match status" value="1"/>
</dbReference>
<dbReference type="SUPFAM" id="SSF57598">
    <property type="entry name" value="Antifungal protein (AGAFP)"/>
    <property type="match status" value="1"/>
</dbReference>
<feature type="signal peptide" evidence="1">
    <location>
        <begin position="1"/>
        <end position="18"/>
    </location>
</feature>
<feature type="propeptide" id="PRO_0000391701" evidence="3">
    <location>
        <begin position="19"/>
        <end position="34"/>
    </location>
</feature>
<feature type="chain" id="PRO_0000391702" description="Antifungal protein B" evidence="3">
    <location>
        <begin position="35"/>
        <end position="92"/>
    </location>
</feature>
<feature type="disulfide bond" evidence="4 10">
    <location>
        <begin position="42"/>
        <end position="70"/>
    </location>
</feature>
<feature type="disulfide bond" evidence="4 10">
    <location>
        <begin position="49"/>
        <end position="77"/>
    </location>
</feature>
<feature type="disulfide bond" evidence="4 10">
    <location>
        <begin position="62"/>
        <end position="88"/>
    </location>
</feature>
<feature type="strand" evidence="11">
    <location>
        <begin position="37"/>
        <end position="43"/>
    </location>
</feature>
<feature type="turn" evidence="11">
    <location>
        <begin position="44"/>
        <end position="47"/>
    </location>
</feature>
<feature type="strand" evidence="11">
    <location>
        <begin position="48"/>
        <end position="53"/>
    </location>
</feature>
<feature type="strand" evidence="11">
    <location>
        <begin position="56"/>
        <end position="61"/>
    </location>
</feature>
<feature type="turn" evidence="11">
    <location>
        <begin position="66"/>
        <end position="68"/>
    </location>
</feature>
<feature type="strand" evidence="11">
    <location>
        <begin position="76"/>
        <end position="80"/>
    </location>
</feature>
<feature type="turn" evidence="11">
    <location>
        <begin position="81"/>
        <end position="84"/>
    </location>
</feature>
<feature type="strand" evidence="11">
    <location>
        <begin position="85"/>
        <end position="88"/>
    </location>
</feature>
<comment type="function">
    <text evidence="2 4 6 7">Antifungal protein that acts as an inhibitor of growth of human pathogenic molds and yeasts (PubMed:19683356, PubMed:29379111). Is active against the model organism Neurospora crassa, the opportunistic human pathogens Aspergillus fumigatus, Trichophyton rubrum, and Aspergillus terreus (PubMed:29379111). Provokes a reduction of the incidence of infections caused by Penicillium digitatum and Penicillium italicum in oranges and by Penicillium expansum in apples (PubMed:34199956). Low doses of pafB have self-inhibition activity (PubMed:29379111). Also shows activity against the model yeast Saccaromyces cerevisiae and the opportunistic human pathogen Candida albicans (PubMed:29379111, PubMed:35499318). No antibacterial activity is observed on the Gram-negative Escherichia coli and the Gram-positive Bacillus subtilis (PubMed:29379111). Finally, also shows anti-viral activity in a model of HCoV 229E infected L132 cells (PubMed:29379111).</text>
</comment>
<comment type="subcellular location">
    <subcellularLocation>
        <location evidence="3 4">Secreted</location>
    </subcellularLocation>
    <subcellularLocation>
        <location evidence="4">Host cytoplasm</location>
    </subcellularLocation>
</comment>
<comment type="induction">
    <text evidence="5">Expression is strongly induced under nutrient excess during the logarithmic growth phase, whereas it remains under the detection level in the supernatant of cultures grown under nutrient limitation.</text>
</comment>
<comment type="mass spectrometry" mass="6494.0" method="Electrospray" evidence="3"/>
<comment type="similarity">
    <text evidence="9">Belongs to the antifungal protein pafB family.</text>
</comment>
<sequence length="92" mass="10119">MQITSIAIVFFAAMGAVANPIARESDDLDARDVQLSKFGGECSLKHNTCTYLKGGKNHVVNCGSAANKKCKSDRHHCEYDEHHKRVDCQTPV</sequence>
<accession>D0EXD3</accession>
<organism>
    <name type="scientific">Penicillium chrysogenum</name>
    <name type="common">Penicillium notatum</name>
    <dbReference type="NCBI Taxonomy" id="5076"/>
    <lineage>
        <taxon>Eukaryota</taxon>
        <taxon>Fungi</taxon>
        <taxon>Dikarya</taxon>
        <taxon>Ascomycota</taxon>
        <taxon>Pezizomycotina</taxon>
        <taxon>Eurotiomycetes</taxon>
        <taxon>Eurotiomycetidae</taxon>
        <taxon>Eurotiales</taxon>
        <taxon>Aspergillaceae</taxon>
        <taxon>Penicillium</taxon>
        <taxon>Penicillium chrysogenum species complex</taxon>
    </lineage>
</organism>
<gene>
    <name evidence="8" type="primary">pafB</name>
</gene>